<sequence>MELTRYEIIKILMEYVTDEIVVCNIGIPSKELFKINDREKNFYMLGSMGLSSSIGHGLALSVNEKVIAIDGDGSVLMNMGSLATIGKTTPKDFLLLIVDNCAYGSTGNQETHSTCTDLYQVSKACGIDSIGVFNEEQLRDAVKLALSESGTKVIVAKARPHNENVPNINLVPTEIKHRFMNAIKK</sequence>
<organism>
    <name type="scientific">Methanococcus maripaludis (strain DSM 14266 / JCM 13030 / NBRC 101832 / S2 / LL)</name>
    <dbReference type="NCBI Taxonomy" id="267377"/>
    <lineage>
        <taxon>Archaea</taxon>
        <taxon>Methanobacteriati</taxon>
        <taxon>Methanobacteriota</taxon>
        <taxon>Methanomada group</taxon>
        <taxon>Methanococci</taxon>
        <taxon>Methanococcales</taxon>
        <taxon>Methanococcaceae</taxon>
        <taxon>Methanococcus</taxon>
    </lineage>
</organism>
<protein>
    <recommendedName>
        <fullName evidence="3">Sulfopyruvate decarboxylase subunit beta</fullName>
        <ecNumber evidence="5">4.1.1.79</ecNumber>
    </recommendedName>
</protein>
<dbReference type="EC" id="4.1.1.79" evidence="5"/>
<dbReference type="EMBL" id="BX950229">
    <property type="protein sequence ID" value="CAF31245.1"/>
    <property type="molecule type" value="Genomic_DNA"/>
</dbReference>
<dbReference type="RefSeq" id="WP_011171633.1">
    <property type="nucleotide sequence ID" value="NC_005791.1"/>
</dbReference>
<dbReference type="SMR" id="Q6LWM0"/>
<dbReference type="STRING" id="267377.MMP1689"/>
<dbReference type="DNASU" id="2762371"/>
<dbReference type="EnsemblBacteria" id="CAF31245">
    <property type="protein sequence ID" value="CAF31245"/>
    <property type="gene ID" value="MMP1689"/>
</dbReference>
<dbReference type="GeneID" id="2762371"/>
<dbReference type="KEGG" id="mmp:MMP1689"/>
<dbReference type="PATRIC" id="fig|267377.15.peg.1729"/>
<dbReference type="eggNOG" id="arCOG01614">
    <property type="taxonomic scope" value="Archaea"/>
</dbReference>
<dbReference type="HOGENOM" id="CLU_117492_1_0_2"/>
<dbReference type="OrthoDB" id="77140at2157"/>
<dbReference type="BRENDA" id="4.1.1.79">
    <property type="organism ID" value="3262"/>
</dbReference>
<dbReference type="UniPathway" id="UPA00355">
    <property type="reaction ID" value="UER00472"/>
</dbReference>
<dbReference type="Proteomes" id="UP000000590">
    <property type="component" value="Chromosome"/>
</dbReference>
<dbReference type="GO" id="GO:0050545">
    <property type="term" value="F:sulfopyruvate decarboxylase activity"/>
    <property type="evidence" value="ECO:0000250"/>
    <property type="project" value="UniProtKB"/>
</dbReference>
<dbReference type="GO" id="GO:0030976">
    <property type="term" value="F:thiamine pyrophosphate binding"/>
    <property type="evidence" value="ECO:0000250"/>
    <property type="project" value="UniProtKB"/>
</dbReference>
<dbReference type="GO" id="GO:0019295">
    <property type="term" value="P:coenzyme M biosynthetic process"/>
    <property type="evidence" value="ECO:0000314"/>
    <property type="project" value="CACAO"/>
</dbReference>
<dbReference type="CDD" id="cd03372">
    <property type="entry name" value="TPP_ComE"/>
    <property type="match status" value="1"/>
</dbReference>
<dbReference type="FunFam" id="3.40.50.970:FF:000095">
    <property type="entry name" value="Sulfopyruvate decarboxylase subunit beta"/>
    <property type="match status" value="1"/>
</dbReference>
<dbReference type="Gene3D" id="3.40.50.970">
    <property type="match status" value="1"/>
</dbReference>
<dbReference type="InterPro" id="IPR022494">
    <property type="entry name" value="Sulfopyruvate_deCO2ase_bsu"/>
</dbReference>
<dbReference type="InterPro" id="IPR029061">
    <property type="entry name" value="THDP-binding"/>
</dbReference>
<dbReference type="InterPro" id="IPR051818">
    <property type="entry name" value="TPP_dependent_decarboxylase"/>
</dbReference>
<dbReference type="InterPro" id="IPR011766">
    <property type="entry name" value="TPP_enzyme_TPP-bd"/>
</dbReference>
<dbReference type="NCBIfam" id="TIGR03846">
    <property type="entry name" value="sulfopy_beta"/>
    <property type="match status" value="1"/>
</dbReference>
<dbReference type="PANTHER" id="PTHR42818:SF1">
    <property type="entry name" value="SULFOPYRUVATE DECARBOXYLASE"/>
    <property type="match status" value="1"/>
</dbReference>
<dbReference type="PANTHER" id="PTHR42818">
    <property type="entry name" value="SULFOPYRUVATE DECARBOXYLASE SUBUNIT ALPHA"/>
    <property type="match status" value="1"/>
</dbReference>
<dbReference type="Pfam" id="PF02775">
    <property type="entry name" value="TPP_enzyme_C"/>
    <property type="match status" value="1"/>
</dbReference>
<dbReference type="SUPFAM" id="SSF52518">
    <property type="entry name" value="Thiamin diphosphate-binding fold (THDP-binding)"/>
    <property type="match status" value="1"/>
</dbReference>
<evidence type="ECO:0000250" key="1">
    <source>
        <dbReference type="UniProtKB" id="P58416"/>
    </source>
</evidence>
<evidence type="ECO:0000269" key="2">
    <source>
    </source>
</evidence>
<evidence type="ECO:0000303" key="3">
    <source>
    </source>
</evidence>
<evidence type="ECO:0000305" key="4"/>
<evidence type="ECO:0000305" key="5">
    <source>
    </source>
</evidence>
<name>COME_METMP</name>
<feature type="chain" id="PRO_0000433483" description="Sulfopyruvate decarboxylase subunit beta">
    <location>
        <begin position="1"/>
        <end position="185"/>
    </location>
</feature>
<keyword id="KW-0174">Coenzyme M biosynthesis</keyword>
<keyword id="KW-0210">Decarboxylase</keyword>
<keyword id="KW-0456">Lyase</keyword>
<keyword id="KW-1185">Reference proteome</keyword>
<keyword id="KW-0786">Thiamine pyrophosphate</keyword>
<accession>Q6LWM0</accession>
<proteinExistence type="evidence at protein level"/>
<gene>
    <name evidence="1" type="primary">comE</name>
    <name type="ordered locus">MMP1689</name>
</gene>
<reference key="1">
    <citation type="journal article" date="2004" name="J. Bacteriol.">
        <title>Complete genome sequence of the genetically tractable hydrogenotrophic methanogen Methanococcus maripaludis.</title>
        <authorList>
            <person name="Hendrickson E.L."/>
            <person name="Kaul R."/>
            <person name="Zhou Y."/>
            <person name="Bovee D."/>
            <person name="Chapman P."/>
            <person name="Chung J."/>
            <person name="Conway de Macario E."/>
            <person name="Dodsworth J.A."/>
            <person name="Gillett W."/>
            <person name="Graham D.E."/>
            <person name="Hackett M."/>
            <person name="Haydock A.K."/>
            <person name="Kang A."/>
            <person name="Land M.L."/>
            <person name="Levy R."/>
            <person name="Lie T.J."/>
            <person name="Major T.A."/>
            <person name="Moore B.C."/>
            <person name="Porat I."/>
            <person name="Palmeiri A."/>
            <person name="Rouse G."/>
            <person name="Saenphimmachak C."/>
            <person name="Soell D."/>
            <person name="Van Dien S."/>
            <person name="Wang T."/>
            <person name="Whitman W.B."/>
            <person name="Xia Q."/>
            <person name="Zhang Y."/>
            <person name="Larimer F.W."/>
            <person name="Olson M.V."/>
            <person name="Leigh J.A."/>
        </authorList>
    </citation>
    <scope>NUCLEOTIDE SEQUENCE [LARGE SCALE GENOMIC DNA]</scope>
    <source>
        <strain>DSM 14266 / JCM 13030 / NBRC 101832 / S2 / LL</strain>
    </source>
</reference>
<reference key="2">
    <citation type="journal article" date="2013" name="Archaea">
        <title>Genetic confirmation of the role of sulfopyruvate decarboxylase in coenzyme M biosynthesis in Methanococcus maripaludis.</title>
        <authorList>
            <person name="Sarmiento F."/>
            <person name="Ellison C.K."/>
            <person name="Whitman W.B."/>
        </authorList>
    </citation>
    <scope>FUNCTION</scope>
    <scope>CATALYTIC ACTIVITY</scope>
    <scope>DISRUPTION PHENOTYPE</scope>
    <source>
        <strain>DSM 14266 / JCM 13030 / NBRC 101832 / S2 / LL</strain>
    </source>
</reference>
<comment type="function">
    <text evidence="2">Involved in the biosynthesis of the coenzyme M (2-mercaptoethanesulfonic acid). Catalyzes the decarboxylation of sulfopyruvate to sulfoacetaldehyde.</text>
</comment>
<comment type="catalytic activity">
    <reaction evidence="5">
        <text>3-sulfopyruvate + H(+) = sulfoacetaldehyde + CO2</text>
        <dbReference type="Rhea" id="RHEA:20948"/>
        <dbReference type="ChEBI" id="CHEBI:15378"/>
        <dbReference type="ChEBI" id="CHEBI:16526"/>
        <dbReference type="ChEBI" id="CHEBI:57940"/>
        <dbReference type="ChEBI" id="CHEBI:58246"/>
        <dbReference type="EC" id="4.1.1.79"/>
    </reaction>
</comment>
<comment type="cofactor">
    <cofactor evidence="1">
        <name>thiamine diphosphate</name>
        <dbReference type="ChEBI" id="CHEBI:58937"/>
    </cofactor>
    <text evidence="1">Binds 1 thiamine pyrophosphate per subunit.</text>
</comment>
<comment type="pathway">
    <text evidence="5">Cofactor biosynthesis; coenzyme M biosynthesis; sulfoacetaldehyde from phosphoenolpyruvate and sulfite: step 4/4.</text>
</comment>
<comment type="subunit">
    <text evidence="1">Heterododecamer composed of 6 subunits alpha and 6 subunits beta.</text>
</comment>
<comment type="disruption phenotype">
    <text evidence="2">Cells lacking this gene are partial coenzyme M auxotrophs; they grow poorly in the absence of coenzyme M and retain less than 3% of the wild type level of coenzyme M biosynthesis.</text>
</comment>
<comment type="similarity">
    <text evidence="4">Belongs to the TPP enzyme family.</text>
</comment>